<organism>
    <name type="scientific">Saccharomyces cerevisiae (strain ATCC 204508 / S288c)</name>
    <name type="common">Baker's yeast</name>
    <dbReference type="NCBI Taxonomy" id="559292"/>
    <lineage>
        <taxon>Eukaryota</taxon>
        <taxon>Fungi</taxon>
        <taxon>Dikarya</taxon>
        <taxon>Ascomycota</taxon>
        <taxon>Saccharomycotina</taxon>
        <taxon>Saccharomycetes</taxon>
        <taxon>Saccharomycetales</taxon>
        <taxon>Saccharomycetaceae</taxon>
        <taxon>Saccharomyces</taxon>
    </lineage>
</organism>
<dbReference type="EC" id="3.2.1.207" evidence="9 10"/>
<dbReference type="EMBL" id="Z36098">
    <property type="protein sequence ID" value="CAA85192.1"/>
    <property type="molecule type" value="Genomic_DNA"/>
</dbReference>
<dbReference type="EMBL" id="BK006936">
    <property type="protein sequence ID" value="DAA07344.1"/>
    <property type="molecule type" value="Genomic_DNA"/>
</dbReference>
<dbReference type="PIR" id="S46105">
    <property type="entry name" value="S46105"/>
</dbReference>
<dbReference type="RefSeq" id="NP_009788.3">
    <property type="nucleotide sequence ID" value="NM_001178577.3"/>
</dbReference>
<dbReference type="SMR" id="P38138"/>
<dbReference type="BioGRID" id="32924">
    <property type="interactions" value="210"/>
</dbReference>
<dbReference type="ComplexPortal" id="CPX-417">
    <property type="entry name" value="Glucosidase II complex"/>
</dbReference>
<dbReference type="DIP" id="DIP-5754N"/>
<dbReference type="FunCoup" id="P38138">
    <property type="interactions" value="1167"/>
</dbReference>
<dbReference type="IntAct" id="P38138">
    <property type="interactions" value="5"/>
</dbReference>
<dbReference type="MINT" id="P38138"/>
<dbReference type="STRING" id="4932.YBR229C"/>
<dbReference type="CAZy" id="GH31">
    <property type="family name" value="Glycoside Hydrolase Family 31"/>
</dbReference>
<dbReference type="GlyCosmos" id="P38138">
    <property type="glycosylation" value="11 sites, No reported glycans"/>
</dbReference>
<dbReference type="GlyGen" id="P38138">
    <property type="glycosylation" value="12 sites"/>
</dbReference>
<dbReference type="iPTMnet" id="P38138"/>
<dbReference type="PaxDb" id="4932-YBR229C"/>
<dbReference type="PeptideAtlas" id="P38138"/>
<dbReference type="EnsemblFungi" id="YBR229C_mRNA">
    <property type="protein sequence ID" value="YBR229C"/>
    <property type="gene ID" value="YBR229C"/>
</dbReference>
<dbReference type="GeneID" id="852530"/>
<dbReference type="KEGG" id="sce:YBR229C"/>
<dbReference type="AGR" id="SGD:S000000433"/>
<dbReference type="SGD" id="S000000433">
    <property type="gene designation" value="ROT2"/>
</dbReference>
<dbReference type="VEuPathDB" id="FungiDB:YBR229C"/>
<dbReference type="eggNOG" id="KOG1066">
    <property type="taxonomic scope" value="Eukaryota"/>
</dbReference>
<dbReference type="GeneTree" id="ENSGT00940000168086"/>
<dbReference type="HOGENOM" id="CLU_000631_7_0_1"/>
<dbReference type="InParanoid" id="P38138"/>
<dbReference type="OMA" id="TVHQPLW"/>
<dbReference type="OrthoDB" id="1334205at2759"/>
<dbReference type="BioCyc" id="MetaCyc:YBR229C-MONOMER"/>
<dbReference type="BioCyc" id="YEAST:YBR229C-MONOMER"/>
<dbReference type="UniPathway" id="UPA00957"/>
<dbReference type="BioGRID-ORCS" id="852530">
    <property type="hits" value="0 hits in 10 CRISPR screens"/>
</dbReference>
<dbReference type="PRO" id="PR:P38138"/>
<dbReference type="Proteomes" id="UP000002311">
    <property type="component" value="Chromosome II"/>
</dbReference>
<dbReference type="RNAct" id="P38138">
    <property type="molecule type" value="protein"/>
</dbReference>
<dbReference type="GO" id="GO:0005783">
    <property type="term" value="C:endoplasmic reticulum"/>
    <property type="evidence" value="ECO:0007005"/>
    <property type="project" value="SGD"/>
</dbReference>
<dbReference type="GO" id="GO:0005788">
    <property type="term" value="C:endoplasmic reticulum lumen"/>
    <property type="evidence" value="ECO:0000314"/>
    <property type="project" value="SGD"/>
</dbReference>
<dbReference type="GO" id="GO:0017177">
    <property type="term" value="C:glucosidase II complex"/>
    <property type="evidence" value="ECO:0000353"/>
    <property type="project" value="ComplexPortal"/>
</dbReference>
<dbReference type="GO" id="GO:0005739">
    <property type="term" value="C:mitochondrion"/>
    <property type="evidence" value="ECO:0007005"/>
    <property type="project" value="SGD"/>
</dbReference>
<dbReference type="GO" id="GO:0090599">
    <property type="term" value="F:alpha-glucosidase activity"/>
    <property type="evidence" value="ECO:0000318"/>
    <property type="project" value="GO_Central"/>
</dbReference>
<dbReference type="GO" id="GO:0030246">
    <property type="term" value="F:carbohydrate binding"/>
    <property type="evidence" value="ECO:0007669"/>
    <property type="project" value="InterPro"/>
</dbReference>
<dbReference type="GO" id="GO:0106407">
    <property type="term" value="F:Glc2Man9GlcNAc2 oligosaccharide glucosidase activity"/>
    <property type="evidence" value="ECO:0000315"/>
    <property type="project" value="SGD"/>
</dbReference>
<dbReference type="GO" id="GO:0033919">
    <property type="term" value="F:glucan 1,3-alpha-glucosidase activity"/>
    <property type="evidence" value="ECO:0000315"/>
    <property type="project" value="SGD"/>
</dbReference>
<dbReference type="GO" id="GO:0070880">
    <property type="term" value="P:fungal-type cell wall beta-glucan biosynthetic process"/>
    <property type="evidence" value="ECO:0000314"/>
    <property type="project" value="ComplexPortal"/>
</dbReference>
<dbReference type="GO" id="GO:0006491">
    <property type="term" value="P:N-glycan processing"/>
    <property type="evidence" value="ECO:0000314"/>
    <property type="project" value="ComplexPortal"/>
</dbReference>
<dbReference type="GO" id="GO:0000271">
    <property type="term" value="P:polysaccharide biosynthetic process"/>
    <property type="evidence" value="ECO:0000303"/>
    <property type="project" value="ComplexPortal"/>
</dbReference>
<dbReference type="CDD" id="cd06603">
    <property type="entry name" value="GH31_GANC_GANAB_alpha"/>
    <property type="match status" value="1"/>
</dbReference>
<dbReference type="CDD" id="cd14752">
    <property type="entry name" value="GH31_N"/>
    <property type="match status" value="1"/>
</dbReference>
<dbReference type="FunFam" id="3.20.20.80:FF:000045">
    <property type="entry name" value="Glucosidase II alpha subunit"/>
    <property type="match status" value="1"/>
</dbReference>
<dbReference type="FunFam" id="2.60.40.1760:FF:000010">
    <property type="entry name" value="Glucosidase II catalytic subunit"/>
    <property type="match status" value="1"/>
</dbReference>
<dbReference type="Gene3D" id="3.20.20.80">
    <property type="entry name" value="Glycosidases"/>
    <property type="match status" value="1"/>
</dbReference>
<dbReference type="Gene3D" id="2.60.40.1760">
    <property type="entry name" value="glycosyl hydrolase (family 31)"/>
    <property type="match status" value="1"/>
</dbReference>
<dbReference type="Gene3D" id="2.60.40.1180">
    <property type="entry name" value="Golgi alpha-mannosidase II"/>
    <property type="match status" value="2"/>
</dbReference>
<dbReference type="InterPro" id="IPR011013">
    <property type="entry name" value="Gal_mutarotase_sf_dom"/>
</dbReference>
<dbReference type="InterPro" id="IPR030458">
    <property type="entry name" value="Glyco_hydro_31_AS"/>
</dbReference>
<dbReference type="InterPro" id="IPR048395">
    <property type="entry name" value="Glyco_hydro_31_C"/>
</dbReference>
<dbReference type="InterPro" id="IPR025887">
    <property type="entry name" value="Glyco_hydro_31_N_dom"/>
</dbReference>
<dbReference type="InterPro" id="IPR000322">
    <property type="entry name" value="Glyco_hydro_31_TIM"/>
</dbReference>
<dbReference type="InterPro" id="IPR013780">
    <property type="entry name" value="Glyco_hydro_b"/>
</dbReference>
<dbReference type="InterPro" id="IPR017853">
    <property type="entry name" value="Glycoside_hydrolase_SF"/>
</dbReference>
<dbReference type="PANTHER" id="PTHR22762">
    <property type="entry name" value="ALPHA-GLUCOSIDASE"/>
    <property type="match status" value="1"/>
</dbReference>
<dbReference type="PANTHER" id="PTHR22762:SF54">
    <property type="entry name" value="BCDNA.GH04962"/>
    <property type="match status" value="1"/>
</dbReference>
<dbReference type="Pfam" id="PF13802">
    <property type="entry name" value="Gal_mutarotas_2"/>
    <property type="match status" value="1"/>
</dbReference>
<dbReference type="Pfam" id="PF01055">
    <property type="entry name" value="Glyco_hydro_31_2nd"/>
    <property type="match status" value="1"/>
</dbReference>
<dbReference type="Pfam" id="PF21365">
    <property type="entry name" value="Glyco_hydro_31_3rd"/>
    <property type="match status" value="1"/>
</dbReference>
<dbReference type="SUPFAM" id="SSF51445">
    <property type="entry name" value="(Trans)glycosidases"/>
    <property type="match status" value="1"/>
</dbReference>
<dbReference type="SUPFAM" id="SSF74650">
    <property type="entry name" value="Galactose mutarotase-like"/>
    <property type="match status" value="1"/>
</dbReference>
<dbReference type="SUPFAM" id="SSF51011">
    <property type="entry name" value="Glycosyl hydrolase domain"/>
    <property type="match status" value="1"/>
</dbReference>
<dbReference type="PROSITE" id="PS00129">
    <property type="entry name" value="GLYCOSYL_HYDROL_F31_1"/>
    <property type="match status" value="1"/>
</dbReference>
<reference key="1">
    <citation type="journal article" date="1994" name="EMBO J.">
        <title>Complete DNA sequence of yeast chromosome II.</title>
        <authorList>
            <person name="Feldmann H."/>
            <person name="Aigle M."/>
            <person name="Aljinovic G."/>
            <person name="Andre B."/>
            <person name="Baclet M.C."/>
            <person name="Barthe C."/>
            <person name="Baur A."/>
            <person name="Becam A.-M."/>
            <person name="Biteau N."/>
            <person name="Boles E."/>
            <person name="Brandt T."/>
            <person name="Brendel M."/>
            <person name="Brueckner M."/>
            <person name="Bussereau F."/>
            <person name="Christiansen C."/>
            <person name="Contreras R."/>
            <person name="Crouzet M."/>
            <person name="Cziepluch C."/>
            <person name="Demolis N."/>
            <person name="Delaveau T."/>
            <person name="Doignon F."/>
            <person name="Domdey H."/>
            <person name="Duesterhus S."/>
            <person name="Dubois E."/>
            <person name="Dujon B."/>
            <person name="El Bakkoury M."/>
            <person name="Entian K.-D."/>
            <person name="Feuermann M."/>
            <person name="Fiers W."/>
            <person name="Fobo G.M."/>
            <person name="Fritz C."/>
            <person name="Gassenhuber J."/>
            <person name="Glansdorff N."/>
            <person name="Goffeau A."/>
            <person name="Grivell L.A."/>
            <person name="de Haan M."/>
            <person name="Hein C."/>
            <person name="Herbert C.J."/>
            <person name="Hollenberg C.P."/>
            <person name="Holmstroem K."/>
            <person name="Jacq C."/>
            <person name="Jacquet M."/>
            <person name="Jauniaux J.-C."/>
            <person name="Jonniaux J.-L."/>
            <person name="Kallesoee T."/>
            <person name="Kiesau P."/>
            <person name="Kirchrath L."/>
            <person name="Koetter P."/>
            <person name="Korol S."/>
            <person name="Liebl S."/>
            <person name="Logghe M."/>
            <person name="Lohan A.J.E."/>
            <person name="Louis E.J."/>
            <person name="Li Z.Y."/>
            <person name="Maat M.J."/>
            <person name="Mallet L."/>
            <person name="Mannhaupt G."/>
            <person name="Messenguy F."/>
            <person name="Miosga T."/>
            <person name="Molemans F."/>
            <person name="Mueller S."/>
            <person name="Nasr F."/>
            <person name="Obermaier B."/>
            <person name="Perea J."/>
            <person name="Pierard A."/>
            <person name="Piravandi E."/>
            <person name="Pohl F.M."/>
            <person name="Pohl T.M."/>
            <person name="Potier S."/>
            <person name="Proft M."/>
            <person name="Purnelle B."/>
            <person name="Ramezani Rad M."/>
            <person name="Rieger M."/>
            <person name="Rose M."/>
            <person name="Schaaff-Gerstenschlaeger I."/>
            <person name="Scherens B."/>
            <person name="Schwarzlose C."/>
            <person name="Skala J."/>
            <person name="Slonimski P.P."/>
            <person name="Smits P.H.M."/>
            <person name="Souciet J.-L."/>
            <person name="Steensma H.Y."/>
            <person name="Stucka R."/>
            <person name="Urrestarazu L.A."/>
            <person name="van der Aart Q.J.M."/>
            <person name="Van Dyck L."/>
            <person name="Vassarotti A."/>
            <person name="Vetter I."/>
            <person name="Vierendeels F."/>
            <person name="Vissers S."/>
            <person name="Wagner G."/>
            <person name="de Wergifosse P."/>
            <person name="Wolfe K.H."/>
            <person name="Zagulski M."/>
            <person name="Zimmermann F.K."/>
            <person name="Mewes H.-W."/>
            <person name="Kleine K."/>
        </authorList>
    </citation>
    <scope>NUCLEOTIDE SEQUENCE [LARGE SCALE GENOMIC DNA]</scope>
    <source>
        <strain>ATCC 204508 / S288c</strain>
    </source>
</reference>
<reference key="2">
    <citation type="journal article" date="2014" name="G3 (Bethesda)">
        <title>The reference genome sequence of Saccharomyces cerevisiae: Then and now.</title>
        <authorList>
            <person name="Engel S.R."/>
            <person name="Dietrich F.S."/>
            <person name="Fisk D.G."/>
            <person name="Binkley G."/>
            <person name="Balakrishnan R."/>
            <person name="Costanzo M.C."/>
            <person name="Dwight S.S."/>
            <person name="Hitz B.C."/>
            <person name="Karra K."/>
            <person name="Nash R.S."/>
            <person name="Weng S."/>
            <person name="Wong E.D."/>
            <person name="Lloyd P."/>
            <person name="Skrzypek M.S."/>
            <person name="Miyasato S.R."/>
            <person name="Simison M."/>
            <person name="Cherry J.M."/>
        </authorList>
    </citation>
    <scope>GENOME REANNOTATION</scope>
    <source>
        <strain>ATCC 204508 / S288c</strain>
    </source>
</reference>
<reference key="3">
    <citation type="journal article" date="1982" name="J. Biol. Chem.">
        <title>Inhibition of N-linked complex oligosaccharide formation by 1-deoxynojirimycin, an inhibitor of processing glucosidases.</title>
        <authorList>
            <person name="Saunier B."/>
            <person name="Kilker R.D. Jr."/>
            <person name="Tkacz J.S."/>
            <person name="Quaroni A."/>
            <person name="Herscovics A."/>
        </authorList>
    </citation>
    <scope>BIOPHYSICOCHEMICAL PROPERTIES</scope>
</reference>
<reference key="4">
    <citation type="journal article" date="1996" name="J. Biol. Chem.">
        <title>Endoplasmic reticulum glucosidase II is composed of a catalytic subunit, conserved from yeast to mammals, and a tightly bound noncatalytic HDEL-containing subunit.</title>
        <authorList>
            <person name="Trombetta E.S."/>
            <person name="Simons J.F."/>
            <person name="Helenius A."/>
        </authorList>
    </citation>
    <scope>FUNCTION</scope>
</reference>
<reference key="5">
    <citation type="journal article" date="2003" name="Nature">
        <title>Global analysis of protein expression in yeast.</title>
        <authorList>
            <person name="Ghaemmaghami S."/>
            <person name="Huh W.-K."/>
            <person name="Bower K."/>
            <person name="Howson R.W."/>
            <person name="Belle A."/>
            <person name="Dephoure N."/>
            <person name="O'Shea E.K."/>
            <person name="Weissman J.S."/>
        </authorList>
    </citation>
    <scope>LEVEL OF PROTEIN EXPRESSION [LARGE SCALE ANALYSIS]</scope>
</reference>
<reference key="6">
    <citation type="journal article" date="2006" name="J. Biol. Chem.">
        <title>Yeast GTB1 encodes a subunit of glucosidase II required for glycoprotein processing in the endoplasmic reticulum.</title>
        <authorList>
            <person name="Wilkinson B.M."/>
            <person name="Purswani J."/>
            <person name="Stirling C.J."/>
        </authorList>
    </citation>
    <scope>FUNCTION</scope>
    <scope>INTERACTION WITH GTB1</scope>
    <scope>SUBCELLULAR LOCATION</scope>
    <scope>GLYCOSYLATION</scope>
</reference>
<proteinExistence type="evidence at protein level"/>
<sequence>MVLLKWLVCQLVFFTAFSHAFTDYLLKKCAQSGFCHRNRVYAENIAKSHHCYYKVDAESIAHDPLENVLHATIIKTIPRLEGDDIAVQFPFSLSFLQDHSVRFTINEKERMPTNSSGLLISSQRFNETWKYAFDKKFQEEANRTSIPQFHFLKQKQTVNSFWSKISSFLSLSNSTADTFHLRNGDVSVEIFAEPFQLKVYWQNALKLIVNEQNFLNIEHHRTKQENFAHVLPEETTFNMFKDNFLYSKHDSMPLGPESVALDFSFMGSTNVYGIPEHATSLRLMDTSGGKEPYRLFNVDVFEYNIGTSQPMYGSIPFMFSSSSTSIFWVNAADTWVDIKYDTSKNKTMTHWISENGVIDVVMSLGPDIPTIIDKFTDLTGRPFLPPISSIGYHQCRWNYNDEMDVLTVDSQMDAHMIPYDFIWLDLEYTNDKKYFTWKQHSFPNPKRLLSKLKKLGRNLVVLIDPHLKKDYEISDRVINENVAVKDHNGNDYVGHCWPGNSIWIDTISKYGQKIWKSFFERFMDLPADLTNLFIWNDMNEPSIFDGPETTAPKDLIHDNYIEERSVHNIYGLSVHEATYDAIKSIYSPSDKRPFLLTRAFFAGSQRTAATWTGDNVANWDYLKISIPMVLSNNIAGMPFIGADIAGFAEDPTPELIARWYQAGLWYPFFRAHAHIDTKRREPYLFNEPLKSIVRDIIQLRYFLLPTLYTMFHKSSVTGFPIMNPMFIEHPEFAELYHIDNQFYWSNSGLLVKPVTEPGQSETEMVFPPGIFYEFASLHSFINNGTDLIEKNISAPLDKIPLFIEGGHIITMKDKYRRSSMLMKNDPYVIVIAPDTEGRAVGDLYVDDGETFGYQRGEYVETQFIFENNTLKNVRSHIPENLTGIHHNTLRNTNIEKIIIAKNNLQHNITLKDSIKVKKNGEESSLPTRSSYENDNKITILNLSLDITEDWEVIF</sequence>
<feature type="signal peptide" evidence="2">
    <location>
        <begin position="1"/>
        <end position="22"/>
    </location>
</feature>
<feature type="chain" id="PRO_0000185370" description="Glucosidase 2 subunit alpha">
    <location>
        <begin position="23"/>
        <end position="954"/>
    </location>
</feature>
<feature type="active site" description="Nucleophile" evidence="3">
    <location>
        <position position="537"/>
    </location>
</feature>
<feature type="active site" evidence="1">
    <location>
        <position position="540"/>
    </location>
</feature>
<feature type="active site" description="Proton donor" evidence="1">
    <location>
        <position position="614"/>
    </location>
</feature>
<feature type="glycosylation site" description="N-linked (GlcNAc...) asparagine" evidence="2">
    <location>
        <position position="114"/>
    </location>
</feature>
<feature type="glycosylation site" description="N-linked (GlcNAc...) asparagine" evidence="2">
    <location>
        <position position="126"/>
    </location>
</feature>
<feature type="glycosylation site" description="N-linked (GlcNAc...) asparagine" evidence="2">
    <location>
        <position position="142"/>
    </location>
</feature>
<feature type="glycosylation site" description="N-linked (GlcNAc...) asparagine" evidence="2">
    <location>
        <position position="173"/>
    </location>
</feature>
<feature type="glycosylation site" description="N-linked (GlcNAc...) asparagine" evidence="2">
    <location>
        <position position="345"/>
    </location>
</feature>
<feature type="glycosylation site" description="N-linked (GlcNAc...) asparagine" evidence="2">
    <location>
        <position position="783"/>
    </location>
</feature>
<feature type="glycosylation site" description="N-linked (GlcNAc...) asparagine" evidence="2">
    <location>
        <position position="791"/>
    </location>
</feature>
<feature type="glycosylation site" description="N-linked (GlcNAc...) asparagine" evidence="2">
    <location>
        <position position="867"/>
    </location>
</feature>
<feature type="glycosylation site" description="N-linked (GlcNAc...) asparagine" evidence="2">
    <location>
        <position position="880"/>
    </location>
</feature>
<feature type="glycosylation site" description="N-linked (GlcNAc...) asparagine" evidence="2">
    <location>
        <position position="907"/>
    </location>
</feature>
<feature type="glycosylation site" description="N-linked (GlcNAc...) asparagine" evidence="2">
    <location>
        <position position="941"/>
    </location>
</feature>
<evidence type="ECO:0000250" key="1"/>
<evidence type="ECO:0000255" key="2"/>
<evidence type="ECO:0000255" key="3">
    <source>
        <dbReference type="PROSITE-ProRule" id="PRU10066"/>
    </source>
</evidence>
<evidence type="ECO:0000269" key="4">
    <source>
    </source>
</evidence>
<evidence type="ECO:0000269" key="5">
    <source>
    </source>
</evidence>
<evidence type="ECO:0000269" key="6">
    <source>
    </source>
</evidence>
<evidence type="ECO:0000269" key="7">
    <source>
    </source>
</evidence>
<evidence type="ECO:0000305" key="8"/>
<evidence type="ECO:0000305" key="9">
    <source>
    </source>
</evidence>
<evidence type="ECO:0000305" key="10">
    <source>
    </source>
</evidence>
<keyword id="KW-0256">Endoplasmic reticulum</keyword>
<keyword id="KW-0325">Glycoprotein</keyword>
<keyword id="KW-0326">Glycosidase</keyword>
<keyword id="KW-0378">Hydrolase</keyword>
<keyword id="KW-1185">Reference proteome</keyword>
<keyword id="KW-0732">Signal</keyword>
<protein>
    <recommendedName>
        <fullName>Glucosidase 2 subunit alpha</fullName>
        <ecNumber evidence="9 10">3.2.1.207</ecNumber>
    </recommendedName>
    <alternativeName>
        <fullName>Alpha-glucosidase II subunit alpha</fullName>
    </alternativeName>
    <alternativeName>
        <fullName>Glucosidase II subunit alpha</fullName>
    </alternativeName>
    <alternativeName>
        <fullName>Reversal of TOR2 lethality protein 2</fullName>
    </alternativeName>
</protein>
<gene>
    <name type="primary">ROT2</name>
    <name type="synonym">GLS2</name>
    <name type="ordered locus">YBR229C</name>
    <name type="ORF">YBR1526</name>
</gene>
<accession>P38138</accession>
<comment type="function">
    <text evidence="5 7">Catalytic subunit of glucosidase 2, which cleaves sequentially the 2 innermost alpha-1,3-linked glucose residues from the Glc(2)Man(9)GlcNAc(2) oligosaccharide precursor of immature glycoproteins.</text>
</comment>
<comment type="catalytic activity">
    <reaction evidence="9 10">
        <text>N(4)-(alpha-D-Glc-(1-&gt;3)-alpha-D-Man-(1-&gt;2)-alpha-D-Man-(1-&gt;2)-alpha-D-Man-(1-&gt;3)-[alpha-D-Man-(1-&gt;2)-alpha-D-Man-(1-&gt;3)-[alpha-D-Man-(1-&gt;2)-alpha-D-Man-(1-&gt;6)]-alpha-D-Man-(1-&gt;6)]-beta-D-Man-(1-&gt;4)-beta-D-GlcNAc-(1-&gt;4)-beta-D-GlcNAc)-L-asparaginyl-[protein] + H2O = N(4)-(alpha-D-Man-(1-&gt;2)-alpha-D-Man-(1-&gt;2)-alpha-D-Man-(1-&gt;3)-[alpha-D-Man-(1-&gt;2)-alpha-D-Man-(1-&gt;3)-[alpha-D-Man-(1-&gt;2)-alpha-D-Man-(1-&gt;6)]-alpha-D-Man-(1-&gt;6)]-beta-D-Man-(1-&gt;4)-beta-D-GlcNAc-(1-&gt;4)-beta-D-GlcNAc)-L-asparaginyl-[protein] (N-glucan mannose isomer 9A1,2,3B1,2,3) + beta-D-glucose</text>
        <dbReference type="Rhea" id="RHEA:56000"/>
        <dbReference type="Rhea" id="RHEA-COMP:14356"/>
        <dbReference type="Rhea" id="RHEA-COMP:14357"/>
        <dbReference type="ChEBI" id="CHEBI:15377"/>
        <dbReference type="ChEBI" id="CHEBI:15903"/>
        <dbReference type="ChEBI" id="CHEBI:59080"/>
        <dbReference type="ChEBI" id="CHEBI:139493"/>
        <dbReference type="EC" id="3.2.1.207"/>
    </reaction>
</comment>
<comment type="catalytic activity">
    <reaction evidence="9 10">
        <text>N(4)-(alpha-D-Glc-(1-&gt;3)-alpha-D-Glc-(1-&gt;3)-alpha-D-Man-(1-&gt;2)-alpha-D-Man-(1-&gt;2)-alpha-D-Man-(1-&gt;3)-[alpha-D-Man-(1-&gt;2)-alpha-D-Man-(1-&gt;3)-[alpha-D-Man-(1-&gt;2)-alpha-D-Man-(1-&gt;6)]-alpha-D-Man-(1-&gt;6)]-beta-D-Man-(1-&gt;4)-beta-D-GlcNAc-(1-&gt;4)-beta-D-GlcNAc)-L-asparaginyl-[protein] + H2O = N(4)-(alpha-D-Glc-(1-&gt;3)-alpha-D-Man-(1-&gt;2)-alpha-D-Man-(1-&gt;2)-alpha-D-Man-(1-&gt;3)-[alpha-D-Man-(1-&gt;2)-alpha-D-Man-(1-&gt;3)-[alpha-D-Man-(1-&gt;2)-alpha-D-Man-(1-&gt;6)]-alpha-D-Man-(1-&gt;6)]-beta-D-Man-(1-&gt;4)-beta-D-GlcNAc-(1-&gt;4)-beta-D-GlcNAc)-L-asparaginyl-[protein] + beta-D-glucose</text>
        <dbReference type="Rhea" id="RHEA:55996"/>
        <dbReference type="Rhea" id="RHEA-COMP:14355"/>
        <dbReference type="Rhea" id="RHEA-COMP:14357"/>
        <dbReference type="ChEBI" id="CHEBI:15377"/>
        <dbReference type="ChEBI" id="CHEBI:15903"/>
        <dbReference type="ChEBI" id="CHEBI:59080"/>
        <dbReference type="ChEBI" id="CHEBI:59082"/>
        <dbReference type="EC" id="3.2.1.207"/>
    </reaction>
</comment>
<comment type="activity regulation">
    <text>Inhibited by glucose, maltose and nigerose, and by the antibiotic deoxynojirimycin.</text>
</comment>
<comment type="biophysicochemical properties">
    <phDependence>
        <text evidence="6">Optimum pH is 5.8-6.8.</text>
    </phDependence>
</comment>
<comment type="pathway">
    <text>Glycan metabolism; N-glycan metabolism.</text>
</comment>
<comment type="subunit">
    <text>Heterodimer of a catalytic subunit alpha (ROT2) and a subunit beta (GTB1).</text>
</comment>
<comment type="interaction">
    <interactant intactId="EBI-21021">
        <id>P38138</id>
    </interactant>
    <interactant intactId="EBI-37493">
        <id>Q04924</id>
        <label>GTB1</label>
    </interactant>
    <organismsDiffer>false</organismsDiffer>
    <experiments>2</experiments>
</comment>
<comment type="subcellular location">
    <subcellularLocation>
        <location evidence="5">Endoplasmic reticulum</location>
    </subcellularLocation>
</comment>
<comment type="miscellaneous">
    <text evidence="4">Present with 238 molecules/cell in log phase SD medium.</text>
</comment>
<comment type="similarity">
    <text evidence="8">Belongs to the glycosyl hydrolase 31 family.</text>
</comment>
<name>GLU2A_YEAST</name>